<accession>Q5MIP6</accession>
<gene>
    <name type="primary">Tctp</name>
</gene>
<sequence length="171" mass="19573">MKIWKDIFTGDEMFSDTYKVKLIDNVMYEVYGKHVSRTLGDVQLDGANPSAEEADEGTDAATESGVDIVLNHRLVETGFADKKQFTTYLKDYMKKLVTRLEENNPSEVEVFKTNINKVMKDLLGRFKDLQFFTGESMDCEGLIAMLEYRDIDGESTPILLCFKHGLEEEKF</sequence>
<organism>
    <name type="scientific">Aedes albopictus</name>
    <name type="common">Asian tiger mosquito</name>
    <name type="synonym">Stegomyia albopicta</name>
    <dbReference type="NCBI Taxonomy" id="7160"/>
    <lineage>
        <taxon>Eukaryota</taxon>
        <taxon>Metazoa</taxon>
        <taxon>Ecdysozoa</taxon>
        <taxon>Arthropoda</taxon>
        <taxon>Hexapoda</taxon>
        <taxon>Insecta</taxon>
        <taxon>Pterygota</taxon>
        <taxon>Neoptera</taxon>
        <taxon>Endopterygota</taxon>
        <taxon>Diptera</taxon>
        <taxon>Nematocera</taxon>
        <taxon>Culicoidea</taxon>
        <taxon>Culicidae</taxon>
        <taxon>Culicinae</taxon>
        <taxon>Aedini</taxon>
        <taxon>Aedes</taxon>
        <taxon>Stegomyia</taxon>
    </lineage>
</organism>
<proteinExistence type="evidence at transcript level"/>
<reference key="1">
    <citation type="journal article" date="2007" name="Insect Biochem. Mol. Biol.">
        <title>An insight into the sialome of the adult female mosquito Aedes albopictus.</title>
        <authorList>
            <person name="Arca B."/>
            <person name="Lombardo F."/>
            <person name="Francischetti I.M."/>
            <person name="Pham V.M."/>
            <person name="Mestres-Simon M."/>
            <person name="Andersen J.F."/>
            <person name="Ribeiro J.M."/>
        </authorList>
    </citation>
    <scope>NUCLEOTIDE SEQUENCE [MRNA]</scope>
    <source>
        <tissue>Salivary gland</tissue>
    </source>
</reference>
<evidence type="ECO:0000250" key="1"/>
<evidence type="ECO:0000255" key="2">
    <source>
        <dbReference type="PROSITE-ProRule" id="PRU01133"/>
    </source>
</evidence>
<comment type="function">
    <text evidence="1">Involved in calcium binding and microtubule stabilization.</text>
</comment>
<comment type="subcellular location">
    <subcellularLocation>
        <location evidence="1">Cytoplasm</location>
    </subcellularLocation>
</comment>
<comment type="similarity">
    <text evidence="2">Belongs to the TCTP family.</text>
</comment>
<name>TCTP_AEDAL</name>
<feature type="chain" id="PRO_0000252306" description="Translationally-controlled tumor protein homolog">
    <location>
        <begin position="1"/>
        <end position="171"/>
    </location>
</feature>
<feature type="domain" description="TCTP" evidence="2">
    <location>
        <begin position="1"/>
        <end position="171"/>
    </location>
</feature>
<dbReference type="EMBL" id="AY826164">
    <property type="protein sequence ID" value="AAV90736.1"/>
    <property type="molecule type" value="mRNA"/>
</dbReference>
<dbReference type="RefSeq" id="XP_019533359.1">
    <property type="nucleotide sequence ID" value="XM_019677814.1"/>
</dbReference>
<dbReference type="RefSeq" id="XP_019543904.1">
    <property type="nucleotide sequence ID" value="XM_019688359.2"/>
</dbReference>
<dbReference type="SMR" id="Q5MIP6"/>
<dbReference type="VEuPathDB" id="VectorBase:AALC636_008499"/>
<dbReference type="VEuPathDB" id="VectorBase:AALC636_027360"/>
<dbReference type="VEuPathDB" id="VectorBase:AALFPA_055409"/>
<dbReference type="Proteomes" id="UP000069940">
    <property type="component" value="Unassembled WGS sequence"/>
</dbReference>
<dbReference type="GO" id="GO:0005737">
    <property type="term" value="C:cytoplasm"/>
    <property type="evidence" value="ECO:0007669"/>
    <property type="project" value="UniProtKB-SubCell"/>
</dbReference>
<dbReference type="GO" id="GO:0005509">
    <property type="term" value="F:calcium ion binding"/>
    <property type="evidence" value="ECO:0007669"/>
    <property type="project" value="TreeGrafter"/>
</dbReference>
<dbReference type="FunFam" id="2.170.150.10:FF:000002">
    <property type="entry name" value="Translationally-controlled tumor protein homolog"/>
    <property type="match status" value="1"/>
</dbReference>
<dbReference type="Gene3D" id="2.170.150.10">
    <property type="entry name" value="Metal Binding Protein, Guanine Nucleotide Exchange Factor, Chain A"/>
    <property type="match status" value="1"/>
</dbReference>
<dbReference type="InterPro" id="IPR011057">
    <property type="entry name" value="Mss4-like_sf"/>
</dbReference>
<dbReference type="InterPro" id="IPR011323">
    <property type="entry name" value="Mss4/transl-control_tumour"/>
</dbReference>
<dbReference type="InterPro" id="IPR034737">
    <property type="entry name" value="TCTP"/>
</dbReference>
<dbReference type="InterPro" id="IPR018103">
    <property type="entry name" value="Translation_control_tumour_CS"/>
</dbReference>
<dbReference type="InterPro" id="IPR018105">
    <property type="entry name" value="Translational_control_tumour_p"/>
</dbReference>
<dbReference type="PANTHER" id="PTHR11991">
    <property type="entry name" value="TRANSLATIONALLY CONTROLLED TUMOR PROTEIN-RELATED"/>
    <property type="match status" value="1"/>
</dbReference>
<dbReference type="PANTHER" id="PTHR11991:SF0">
    <property type="entry name" value="TRANSLATIONALLY-CONTROLLED TUMOR PROTEIN"/>
    <property type="match status" value="1"/>
</dbReference>
<dbReference type="Pfam" id="PF00838">
    <property type="entry name" value="TCTP"/>
    <property type="match status" value="1"/>
</dbReference>
<dbReference type="PRINTS" id="PR01653">
    <property type="entry name" value="TCTPROTEIN"/>
</dbReference>
<dbReference type="SUPFAM" id="SSF51316">
    <property type="entry name" value="Mss4-like"/>
    <property type="match status" value="1"/>
</dbReference>
<dbReference type="PROSITE" id="PS01002">
    <property type="entry name" value="TCTP_1"/>
    <property type="match status" value="1"/>
</dbReference>
<dbReference type="PROSITE" id="PS01003">
    <property type="entry name" value="TCTP_2"/>
    <property type="match status" value="1"/>
</dbReference>
<dbReference type="PROSITE" id="PS51797">
    <property type="entry name" value="TCTP_3"/>
    <property type="match status" value="1"/>
</dbReference>
<protein>
    <recommendedName>
        <fullName>Translationally-controlled tumor protein homolog</fullName>
        <shortName>TCTP</shortName>
    </recommendedName>
</protein>
<keyword id="KW-0106">Calcium</keyword>
<keyword id="KW-0963">Cytoplasm</keyword>